<keyword id="KW-0963">Cytoplasm</keyword>
<keyword id="KW-0378">Hydrolase</keyword>
<keyword id="KW-0460">Magnesium</keyword>
<keyword id="KW-0479">Metal-binding</keyword>
<keyword id="KW-0539">Nucleus</keyword>
<keyword id="KW-1185">Reference proteome</keyword>
<feature type="chain" id="PRO_0000203466" description="Polyol phosphate phosphatase PYP1">
    <location>
        <begin position="1"/>
        <end position="241"/>
    </location>
</feature>
<feature type="active site" description="Nucleophile" evidence="1">
    <location>
        <position position="9"/>
    </location>
</feature>
<feature type="active site" description="Proton donor" evidence="1">
    <location>
        <position position="11"/>
    </location>
</feature>
<feature type="binding site" evidence="1">
    <location>
        <position position="9"/>
    </location>
    <ligand>
        <name>Mg(2+)</name>
        <dbReference type="ChEBI" id="CHEBI:18420"/>
    </ligand>
</feature>
<feature type="binding site" evidence="1">
    <location>
        <position position="11"/>
    </location>
    <ligand>
        <name>Mg(2+)</name>
        <dbReference type="ChEBI" id="CHEBI:18420"/>
    </ligand>
</feature>
<feature type="binding site" evidence="1">
    <location>
        <position position="179"/>
    </location>
    <ligand>
        <name>Mg(2+)</name>
        <dbReference type="ChEBI" id="CHEBI:18420"/>
    </ligand>
</feature>
<accession>P53981</accession>
<accession>D6W1G7</accession>
<name>PYP1_YEAST</name>
<gene>
    <name evidence="6" type="primary">PYP1</name>
    <name evidence="8" type="ordered locus">YNL010W</name>
    <name type="ORF">N2866</name>
</gene>
<dbReference type="EC" id="3.1.3.50" evidence="5"/>
<dbReference type="EMBL" id="Z71286">
    <property type="protein sequence ID" value="CAA95870.1"/>
    <property type="molecule type" value="Genomic_DNA"/>
</dbReference>
<dbReference type="EMBL" id="BK006947">
    <property type="protein sequence ID" value="DAA10533.1"/>
    <property type="molecule type" value="Genomic_DNA"/>
</dbReference>
<dbReference type="PIR" id="S62922">
    <property type="entry name" value="S62922"/>
</dbReference>
<dbReference type="RefSeq" id="NP_014388.3">
    <property type="nucleotide sequence ID" value="NM_001182849.3"/>
</dbReference>
<dbReference type="SMR" id="P53981"/>
<dbReference type="BioGRID" id="35815">
    <property type="interactions" value="131"/>
</dbReference>
<dbReference type="FunCoup" id="P53981">
    <property type="interactions" value="67"/>
</dbReference>
<dbReference type="IntAct" id="P53981">
    <property type="interactions" value="6"/>
</dbReference>
<dbReference type="MINT" id="P53981"/>
<dbReference type="STRING" id="4932.YNL010W"/>
<dbReference type="iPTMnet" id="P53981"/>
<dbReference type="PaxDb" id="4932-YNL010W"/>
<dbReference type="PeptideAtlas" id="P53981"/>
<dbReference type="EnsemblFungi" id="YNL010W_mRNA">
    <property type="protein sequence ID" value="YNL010W"/>
    <property type="gene ID" value="YNL010W"/>
</dbReference>
<dbReference type="GeneID" id="855722"/>
<dbReference type="KEGG" id="sce:YNL010W"/>
<dbReference type="AGR" id="SGD:S000004955"/>
<dbReference type="SGD" id="S000004955">
    <property type="gene designation" value="PYP1"/>
</dbReference>
<dbReference type="VEuPathDB" id="FungiDB:YNL010W"/>
<dbReference type="eggNOG" id="ENOG502QRU0">
    <property type="taxonomic scope" value="Eukaryota"/>
</dbReference>
<dbReference type="GeneTree" id="ENSGT00940000176373"/>
<dbReference type="HOGENOM" id="CLU_058495_1_0_1"/>
<dbReference type="InParanoid" id="P53981"/>
<dbReference type="OMA" id="VPFHEFD"/>
<dbReference type="OrthoDB" id="10014216at2759"/>
<dbReference type="BioCyc" id="YEAST:G3O-33051-MONOMER"/>
<dbReference type="BRENDA" id="3.1.3.21">
    <property type="organism ID" value="984"/>
</dbReference>
<dbReference type="BioGRID-ORCS" id="855722">
    <property type="hits" value="1 hit in 10 CRISPR screens"/>
</dbReference>
<dbReference type="CD-CODE" id="E03F929F">
    <property type="entry name" value="Stress granule"/>
</dbReference>
<dbReference type="PRO" id="PR:P53981"/>
<dbReference type="Proteomes" id="UP000002311">
    <property type="component" value="Chromosome XIV"/>
</dbReference>
<dbReference type="RNAct" id="P53981">
    <property type="molecule type" value="protein"/>
</dbReference>
<dbReference type="GO" id="GO:0005737">
    <property type="term" value="C:cytoplasm"/>
    <property type="evidence" value="ECO:0007005"/>
    <property type="project" value="SGD"/>
</dbReference>
<dbReference type="GO" id="GO:0005634">
    <property type="term" value="C:nucleus"/>
    <property type="evidence" value="ECO:0007005"/>
    <property type="project" value="SGD"/>
</dbReference>
<dbReference type="GO" id="GO:0000121">
    <property type="term" value="F:glycerol-1-phosphatase activity"/>
    <property type="evidence" value="ECO:0000314"/>
    <property type="project" value="SGD"/>
</dbReference>
<dbReference type="GO" id="GO:0043136">
    <property type="term" value="F:glycerol-3-phosphatase activity"/>
    <property type="evidence" value="ECO:0000314"/>
    <property type="project" value="SGD"/>
</dbReference>
<dbReference type="GO" id="GO:0036424">
    <property type="term" value="F:L-phosphoserine phosphatase activity"/>
    <property type="evidence" value="ECO:0000318"/>
    <property type="project" value="GO_Central"/>
</dbReference>
<dbReference type="GO" id="GO:0000287">
    <property type="term" value="F:magnesium ion binding"/>
    <property type="evidence" value="ECO:0000318"/>
    <property type="project" value="GO_Central"/>
</dbReference>
<dbReference type="GO" id="GO:0110130">
    <property type="term" value="F:ribitol-5-phosphatase activity"/>
    <property type="evidence" value="ECO:0000314"/>
    <property type="project" value="SGD"/>
</dbReference>
<dbReference type="GO" id="GO:0050286">
    <property type="term" value="F:sorbitol-6-phosphatase activity"/>
    <property type="evidence" value="ECO:0000314"/>
    <property type="project" value="SGD"/>
</dbReference>
<dbReference type="GO" id="GO:0052646">
    <property type="term" value="P:alditol phosphate metabolic process"/>
    <property type="evidence" value="ECO:0000315"/>
    <property type="project" value="SGD"/>
</dbReference>
<dbReference type="GO" id="GO:0006564">
    <property type="term" value="P:L-serine biosynthetic process"/>
    <property type="evidence" value="ECO:0000318"/>
    <property type="project" value="GO_Central"/>
</dbReference>
<dbReference type="CDD" id="cd07524">
    <property type="entry name" value="HAD_Pase"/>
    <property type="match status" value="1"/>
</dbReference>
<dbReference type="Gene3D" id="3.90.1470.20">
    <property type="match status" value="1"/>
</dbReference>
<dbReference type="Gene3D" id="3.40.50.1000">
    <property type="entry name" value="HAD superfamily/HAD-like"/>
    <property type="match status" value="1"/>
</dbReference>
<dbReference type="InterPro" id="IPR050849">
    <property type="entry name" value="HAD-like_hydrolase_phosphatase"/>
</dbReference>
<dbReference type="InterPro" id="IPR036412">
    <property type="entry name" value="HAD-like_sf"/>
</dbReference>
<dbReference type="InterPro" id="IPR006384">
    <property type="entry name" value="HAD_hydro_PyrdxlP_Pase-like"/>
</dbReference>
<dbReference type="InterPro" id="IPR023214">
    <property type="entry name" value="HAD_sf"/>
</dbReference>
<dbReference type="NCBIfam" id="TIGR01489">
    <property type="entry name" value="DKMTPPase-SF"/>
    <property type="match status" value="1"/>
</dbReference>
<dbReference type="NCBIfam" id="TIGR01488">
    <property type="entry name" value="HAD-SF-IB"/>
    <property type="match status" value="1"/>
</dbReference>
<dbReference type="PANTHER" id="PTHR28181:SF2">
    <property type="entry name" value="PHOSPHORIC MONOESTER HYDROLASE"/>
    <property type="match status" value="1"/>
</dbReference>
<dbReference type="PANTHER" id="PTHR28181">
    <property type="entry name" value="UPF0655 PROTEIN YCR015C"/>
    <property type="match status" value="1"/>
</dbReference>
<dbReference type="Pfam" id="PF12710">
    <property type="entry name" value="HAD"/>
    <property type="match status" value="1"/>
</dbReference>
<dbReference type="SUPFAM" id="SSF56784">
    <property type="entry name" value="HAD-like"/>
    <property type="match status" value="1"/>
</dbReference>
<proteinExistence type="evidence at protein level"/>
<organism>
    <name type="scientific">Saccharomyces cerevisiae (strain ATCC 204508 / S288c)</name>
    <name type="common">Baker's yeast</name>
    <dbReference type="NCBI Taxonomy" id="559292"/>
    <lineage>
        <taxon>Eukaryota</taxon>
        <taxon>Fungi</taxon>
        <taxon>Dikarya</taxon>
        <taxon>Ascomycota</taxon>
        <taxon>Saccharomycotina</taxon>
        <taxon>Saccharomycetes</taxon>
        <taxon>Saccharomycetales</taxon>
        <taxon>Saccharomycetaceae</taxon>
        <taxon>Saccharomyces</taxon>
    </lineage>
</organism>
<sequence length="241" mass="27481">MVKAVIFTDFDGTVTLEDSNDYLTDTLGFGKEKRLKVFEGVLDDTKSFRQGFMEMLESIHTPFPECIKILEKKIRLDPGFKDTFEWAQENDVPVIVVSSGMKPIIKVLLTRLVGQESIHKIDIVSNEVEIDAHDQWKIIYKDESPFGHDKSRSIDAYKKKFESTLKAGEQRPVYFYCGDGVSDLSAAKECDLLFAKRGKDLVTYCKKQNVPFHEFDTFKDILASMKQVLAGEKTVAELMEN</sequence>
<comment type="function">
    <text evidence="5">Hydrolyzes sugar alcohol (polyol) phosphates (PubMed:30240188). Dephosphorylates a variety of substrates, including: sn-glycerol 1-phosphate (D-glycerol 3-phosphate), D-ribitol 5-phosphate, D-sorbitol 6-phosphate (D-glucitol 6-phosphate), and D-erythrose 4-phosphate (PubMed:30240188). Prevents accumulation of toxic levels of polyol phosphates, which can impair glycolysis by inhibiting glucose-6-phosphate isomerase (PubMed:30240188).</text>
</comment>
<comment type="catalytic activity">
    <reaction evidence="5">
        <text>D-ribitol 5-phosphate + H2O = ribitol + phosphate</text>
        <dbReference type="Rhea" id="RHEA:47648"/>
        <dbReference type="ChEBI" id="CHEBI:15377"/>
        <dbReference type="ChEBI" id="CHEBI:15963"/>
        <dbReference type="ChEBI" id="CHEBI:43474"/>
        <dbReference type="ChEBI" id="CHEBI:57695"/>
    </reaction>
    <physiologicalReaction direction="left-to-right" evidence="5">
        <dbReference type="Rhea" id="RHEA:47649"/>
    </physiologicalReaction>
</comment>
<comment type="catalytic activity">
    <reaction evidence="4">
        <text>D-sorbitol 6-phosphate + H2O = D-sorbitol + phosphate</text>
        <dbReference type="Rhea" id="RHEA:24580"/>
        <dbReference type="ChEBI" id="CHEBI:15377"/>
        <dbReference type="ChEBI" id="CHEBI:17924"/>
        <dbReference type="ChEBI" id="CHEBI:43474"/>
        <dbReference type="ChEBI" id="CHEBI:60084"/>
        <dbReference type="EC" id="3.1.3.50"/>
    </reaction>
    <physiologicalReaction direction="left-to-right" evidence="5">
        <dbReference type="Rhea" id="RHEA:24581"/>
    </physiologicalReaction>
</comment>
<comment type="catalytic activity">
    <reaction evidence="4">
        <text>sn-glycerol 1-phosphate + H2O = glycerol + phosphate</text>
        <dbReference type="Rhea" id="RHEA:46084"/>
        <dbReference type="ChEBI" id="CHEBI:15377"/>
        <dbReference type="ChEBI" id="CHEBI:17754"/>
        <dbReference type="ChEBI" id="CHEBI:43474"/>
        <dbReference type="ChEBI" id="CHEBI:57685"/>
    </reaction>
    <physiologicalReaction direction="left-to-right" evidence="5">
        <dbReference type="Rhea" id="RHEA:46085"/>
    </physiologicalReaction>
</comment>
<comment type="catalytic activity">
    <reaction evidence="4">
        <text>D-erythrose 4-phosphate + H2O = D-erythrose + phosphate</text>
        <dbReference type="Rhea" id="RHEA:66376"/>
        <dbReference type="ChEBI" id="CHEBI:15377"/>
        <dbReference type="ChEBI" id="CHEBI:16897"/>
        <dbReference type="ChEBI" id="CHEBI:27904"/>
        <dbReference type="ChEBI" id="CHEBI:43474"/>
    </reaction>
    <physiologicalReaction direction="left-to-right" evidence="5">
        <dbReference type="Rhea" id="RHEA:66377"/>
    </physiologicalReaction>
</comment>
<comment type="cofactor">
    <cofactor evidence="1">
        <name>Mg(2+)</name>
        <dbReference type="ChEBI" id="CHEBI:18420"/>
    </cofactor>
</comment>
<comment type="subcellular location">
    <subcellularLocation>
        <location evidence="2">Cytoplasm</location>
    </subcellularLocation>
    <subcellularLocation>
        <location evidence="2">Nucleus</location>
    </subcellularLocation>
</comment>
<comment type="disruption phenotype">
    <text evidence="5">Impairs the ability to metabolize cellular polyol phosphates which may build up to toxic levels in cells.</text>
</comment>
<comment type="miscellaneous">
    <text evidence="3">Present with 12600 molecules/cell in log phase SD medium.</text>
</comment>
<comment type="similarity">
    <text evidence="7">Belongs to the HAD-like hydrolase superfamily.</text>
</comment>
<comment type="caution">
    <text evidence="5">Unlike the glycerol-1-phosphate phosphohydrolases, this enzyme cannot hydrolyze L-glycerol 3-phosphate (sn-glycerol 3-phosphate) and is therefore not associated with EC 3.1.3.21 / RHEA:11476.</text>
</comment>
<evidence type="ECO:0000250" key="1">
    <source>
        <dbReference type="UniProtKB" id="Q58989"/>
    </source>
</evidence>
<evidence type="ECO:0000269" key="2">
    <source>
    </source>
</evidence>
<evidence type="ECO:0000269" key="3">
    <source>
    </source>
</evidence>
<evidence type="ECO:0000269" key="4">
    <source>
    </source>
</evidence>
<evidence type="ECO:0000269" key="5">
    <source>
    </source>
</evidence>
<evidence type="ECO:0000303" key="6">
    <source>
    </source>
</evidence>
<evidence type="ECO:0000305" key="7"/>
<evidence type="ECO:0000312" key="8">
    <source>
        <dbReference type="SGD" id="S000004955"/>
    </source>
</evidence>
<protein>
    <recommendedName>
        <fullName evidence="6">Polyol phosphate phosphatase PYP1</fullName>
        <ecNumber evidence="5">3.1.3.50</ecNumber>
    </recommendedName>
</protein>
<reference key="1">
    <citation type="journal article" date="1997" name="Nature">
        <title>The nucleotide sequence of Saccharomyces cerevisiae chromosome XIV and its evolutionary implications.</title>
        <authorList>
            <person name="Philippsen P."/>
            <person name="Kleine K."/>
            <person name="Poehlmann R."/>
            <person name="Duesterhoeft A."/>
            <person name="Hamberg K."/>
            <person name="Hegemann J.H."/>
            <person name="Obermaier B."/>
            <person name="Urrestarazu L.A."/>
            <person name="Aert R."/>
            <person name="Albermann K."/>
            <person name="Altmann R."/>
            <person name="Andre B."/>
            <person name="Baladron V."/>
            <person name="Ballesta J.P.G."/>
            <person name="Becam A.-M."/>
            <person name="Beinhauer J.D."/>
            <person name="Boskovic J."/>
            <person name="Buitrago M.J."/>
            <person name="Bussereau F."/>
            <person name="Coster F."/>
            <person name="Crouzet M."/>
            <person name="D'Angelo M."/>
            <person name="Dal Pero F."/>
            <person name="De Antoni A."/>
            <person name="del Rey F."/>
            <person name="Doignon F."/>
            <person name="Domdey H."/>
            <person name="Dubois E."/>
            <person name="Fiedler T.A."/>
            <person name="Fleig U."/>
            <person name="Floeth M."/>
            <person name="Fritz C."/>
            <person name="Gaillardin C."/>
            <person name="Garcia-Cantalejo J.M."/>
            <person name="Glansdorff N."/>
            <person name="Goffeau A."/>
            <person name="Gueldener U."/>
            <person name="Herbert C.J."/>
            <person name="Heumann K."/>
            <person name="Heuss-Neitzel D."/>
            <person name="Hilbert H."/>
            <person name="Hinni K."/>
            <person name="Iraqui Houssaini I."/>
            <person name="Jacquet M."/>
            <person name="Jimenez A."/>
            <person name="Jonniaux J.-L."/>
            <person name="Karpfinger-Hartl L."/>
            <person name="Lanfranchi G."/>
            <person name="Lepingle A."/>
            <person name="Levesque H."/>
            <person name="Lyck R."/>
            <person name="Maftahi M."/>
            <person name="Mallet L."/>
            <person name="Maurer C.T.C."/>
            <person name="Messenguy F."/>
            <person name="Mewes H.-W."/>
            <person name="Moestl D."/>
            <person name="Nasr F."/>
            <person name="Nicaud J.-M."/>
            <person name="Niedenthal R.K."/>
            <person name="Pandolfo D."/>
            <person name="Pierard A."/>
            <person name="Piravandi E."/>
            <person name="Planta R.J."/>
            <person name="Pohl T.M."/>
            <person name="Purnelle B."/>
            <person name="Rebischung C."/>
            <person name="Remacha M.A."/>
            <person name="Revuelta J.L."/>
            <person name="Rinke M."/>
            <person name="Saiz J.E."/>
            <person name="Sartorello F."/>
            <person name="Scherens B."/>
            <person name="Sen-Gupta M."/>
            <person name="Soler-Mira A."/>
            <person name="Urbanus J.H.M."/>
            <person name="Valle G."/>
            <person name="Van Dyck L."/>
            <person name="Verhasselt P."/>
            <person name="Vierendeels F."/>
            <person name="Vissers S."/>
            <person name="Voet M."/>
            <person name="Volckaert G."/>
            <person name="Wach A."/>
            <person name="Wambutt R."/>
            <person name="Wedler H."/>
            <person name="Zollner A."/>
            <person name="Hani J."/>
        </authorList>
    </citation>
    <scope>NUCLEOTIDE SEQUENCE [LARGE SCALE GENOMIC DNA]</scope>
    <source>
        <strain>ATCC 204508 / S288c</strain>
    </source>
</reference>
<reference key="2">
    <citation type="journal article" date="2014" name="G3 (Bethesda)">
        <title>The reference genome sequence of Saccharomyces cerevisiae: Then and now.</title>
        <authorList>
            <person name="Engel S.R."/>
            <person name="Dietrich F.S."/>
            <person name="Fisk D.G."/>
            <person name="Binkley G."/>
            <person name="Balakrishnan R."/>
            <person name="Costanzo M.C."/>
            <person name="Dwight S.S."/>
            <person name="Hitz B.C."/>
            <person name="Karra K."/>
            <person name="Nash R.S."/>
            <person name="Weng S."/>
            <person name="Wong E.D."/>
            <person name="Lloyd P."/>
            <person name="Skrzypek M.S."/>
            <person name="Miyasato S.R."/>
            <person name="Simison M."/>
            <person name="Cherry J.M."/>
        </authorList>
    </citation>
    <scope>GENOME REANNOTATION</scope>
    <source>
        <strain>ATCC 204508 / S288c</strain>
    </source>
</reference>
<reference key="3">
    <citation type="journal article" date="2003" name="Nature">
        <title>Global analysis of protein localization in budding yeast.</title>
        <authorList>
            <person name="Huh W.-K."/>
            <person name="Falvo J.V."/>
            <person name="Gerke L.C."/>
            <person name="Carroll A.S."/>
            <person name="Howson R.W."/>
            <person name="Weissman J.S."/>
            <person name="O'Shea E.K."/>
        </authorList>
    </citation>
    <scope>SUBCELLULAR LOCATION [LARGE SCALE ANALYSIS]</scope>
</reference>
<reference key="4">
    <citation type="journal article" date="2003" name="Nature">
        <title>Global analysis of protein expression in yeast.</title>
        <authorList>
            <person name="Ghaemmaghami S."/>
            <person name="Huh W.-K."/>
            <person name="Bower K."/>
            <person name="Howson R.W."/>
            <person name="Belle A."/>
            <person name="Dephoure N."/>
            <person name="O'Shea E.K."/>
            <person name="Weissman J.S."/>
        </authorList>
    </citation>
    <scope>LEVEL OF PROTEIN EXPRESSION [LARGE SCALE ANALYSIS]</scope>
</reference>
<reference key="5">
    <citation type="journal article" date="2018" name="ACS Chem. Biol.">
        <title>Discovery and Functional Characterization of a Yeast Sugar Alcohol Phosphatase.</title>
        <authorList>
            <person name="Xu Y.F."/>
            <person name="Lu W."/>
            <person name="Chen J.C."/>
            <person name="Johnson S.A."/>
            <person name="Gibney P.A."/>
            <person name="Thomas D.G."/>
            <person name="Brown G."/>
            <person name="May A.L."/>
            <person name="Campagna S.R."/>
            <person name="Yakunin A.F."/>
            <person name="Botstein D."/>
            <person name="Rabinowitz J.D."/>
        </authorList>
    </citation>
    <scope>FUNCTION</scope>
    <scope>CATALYTIC ACTIVITY</scope>
    <scope>DISRUPTION PHENOTYPE</scope>
</reference>